<proteinExistence type="evidence at protein level"/>
<protein>
    <recommendedName>
        <fullName>Hemopexin</fullName>
    </recommendedName>
</protein>
<accession>P20057</accession>
<keyword id="KW-0903">Direct protein sequencing</keyword>
<keyword id="KW-0349">Heme</keyword>
<keyword id="KW-0408">Iron</keyword>
<keyword id="KW-0479">Metal-binding</keyword>
<keyword id="KW-1185">Reference proteome</keyword>
<keyword id="KW-0677">Repeat</keyword>
<keyword id="KW-0964">Secreted</keyword>
<keyword id="KW-0813">Transport</keyword>
<comment type="function">
    <text>Binds heme and transports it to the liver for breakdown and iron recovery, after which the free hemopexin returns to the circulation.</text>
</comment>
<comment type="subcellular location">
    <subcellularLocation>
        <location>Secreted</location>
    </subcellularLocation>
</comment>
<comment type="tissue specificity">
    <text>Expressed by the liver and secreted in plasma.</text>
</comment>
<comment type="similarity">
    <text evidence="2">Belongs to the hemopexin family.</text>
</comment>
<reference key="1">
    <citation type="journal article" date="1988" name="Biochem. Biophys. Res. Commun.">
        <title>N-terminal amino acid sequences of the hemopexins from chicken, rat and rabbit.</title>
        <authorList>
            <person name="Wellner D."/>
            <person name="Cheng K.C."/>
            <person name="Mueller-Eberhard U."/>
        </authorList>
    </citation>
    <scope>PROTEIN SEQUENCE</scope>
</reference>
<dbReference type="PIR" id="C31514">
    <property type="entry name" value="C31514"/>
</dbReference>
<dbReference type="InParanoid" id="P20057"/>
<dbReference type="OrthoDB" id="8953614at2759"/>
<dbReference type="Proteomes" id="UP000000539">
    <property type="component" value="Unassembled WGS sequence"/>
</dbReference>
<dbReference type="GO" id="GO:0005576">
    <property type="term" value="C:extracellular region"/>
    <property type="evidence" value="ECO:0007669"/>
    <property type="project" value="UniProtKB-SubCell"/>
</dbReference>
<dbReference type="GO" id="GO:0046872">
    <property type="term" value="F:metal ion binding"/>
    <property type="evidence" value="ECO:0007669"/>
    <property type="project" value="UniProtKB-KW"/>
</dbReference>
<sequence>RPLTQHKPHTPGDEHPHGAEPPGXDTALAQIXGD</sequence>
<evidence type="ECO:0000256" key="1">
    <source>
        <dbReference type="SAM" id="MobiDB-lite"/>
    </source>
</evidence>
<evidence type="ECO:0000305" key="2"/>
<organism>
    <name type="scientific">Gallus gallus</name>
    <name type="common">Chicken</name>
    <dbReference type="NCBI Taxonomy" id="9031"/>
    <lineage>
        <taxon>Eukaryota</taxon>
        <taxon>Metazoa</taxon>
        <taxon>Chordata</taxon>
        <taxon>Craniata</taxon>
        <taxon>Vertebrata</taxon>
        <taxon>Euteleostomi</taxon>
        <taxon>Archelosauria</taxon>
        <taxon>Archosauria</taxon>
        <taxon>Dinosauria</taxon>
        <taxon>Saurischia</taxon>
        <taxon>Theropoda</taxon>
        <taxon>Coelurosauria</taxon>
        <taxon>Aves</taxon>
        <taxon>Neognathae</taxon>
        <taxon>Galloanserae</taxon>
        <taxon>Galliformes</taxon>
        <taxon>Phasianidae</taxon>
        <taxon>Phasianinae</taxon>
        <taxon>Gallus</taxon>
    </lineage>
</organism>
<feature type="chain" id="PRO_0000083946" description="Hemopexin">
    <location>
        <begin position="1"/>
        <end position="34" status="greater than"/>
    </location>
</feature>
<feature type="region of interest" description="Disordered" evidence="1">
    <location>
        <begin position="1"/>
        <end position="25"/>
    </location>
</feature>
<feature type="non-terminal residue">
    <location>
        <position position="34"/>
    </location>
</feature>
<name>HEMO_CHICK</name>
<gene>
    <name type="primary">HPX</name>
</gene>